<comment type="function">
    <text evidence="1">One of the primary rRNA binding proteins, it binds directly to 16S rRNA where it nucleates assembly of the head domain of the 30S subunit.</text>
</comment>
<comment type="subunit">
    <text>Part of the 30S ribosomal subunit.</text>
</comment>
<comment type="subcellular location">
    <subcellularLocation>
        <location>Plastid</location>
        <location>Chloroplast</location>
    </subcellularLocation>
</comment>
<comment type="similarity">
    <text evidence="2">Belongs to the universal ribosomal protein uS7 family.</text>
</comment>
<organism>
    <name type="scientific">Chaetosphaeridium globosum</name>
    <name type="common">Charophycean green alga</name>
    <name type="synonym">Herposteiron globosum</name>
    <dbReference type="NCBI Taxonomy" id="96477"/>
    <lineage>
        <taxon>Eukaryota</taxon>
        <taxon>Viridiplantae</taxon>
        <taxon>Streptophyta</taxon>
        <taxon>Coleochaetophyceae</taxon>
        <taxon>Coleochaetales</taxon>
        <taxon>Chaetosphaeridiaceae</taxon>
        <taxon>Chaetosphaeridium</taxon>
    </lineage>
</organism>
<feature type="chain" id="PRO_0000124442" description="Small ribosomal subunit protein uS7c">
    <location>
        <begin position="1"/>
        <end position="155"/>
    </location>
</feature>
<name>RR7_CHAGL</name>
<protein>
    <recommendedName>
        <fullName evidence="2">Small ribosomal subunit protein uS7c</fullName>
    </recommendedName>
    <alternativeName>
        <fullName>30S ribosomal protein S7, chloroplastic</fullName>
    </alternativeName>
</protein>
<dbReference type="EMBL" id="AF494278">
    <property type="protein sequence ID" value="AAM96578.1"/>
    <property type="molecule type" value="Genomic_DNA"/>
</dbReference>
<dbReference type="RefSeq" id="NP_683769.1">
    <property type="nucleotide sequence ID" value="NC_004115.1"/>
</dbReference>
<dbReference type="SMR" id="P59063"/>
<dbReference type="GeneID" id="860734"/>
<dbReference type="GO" id="GO:0009507">
    <property type="term" value="C:chloroplast"/>
    <property type="evidence" value="ECO:0007669"/>
    <property type="project" value="UniProtKB-SubCell"/>
</dbReference>
<dbReference type="GO" id="GO:0015935">
    <property type="term" value="C:small ribosomal subunit"/>
    <property type="evidence" value="ECO:0007669"/>
    <property type="project" value="InterPro"/>
</dbReference>
<dbReference type="GO" id="GO:0019843">
    <property type="term" value="F:rRNA binding"/>
    <property type="evidence" value="ECO:0007669"/>
    <property type="project" value="UniProtKB-UniRule"/>
</dbReference>
<dbReference type="GO" id="GO:0003735">
    <property type="term" value="F:structural constituent of ribosome"/>
    <property type="evidence" value="ECO:0007669"/>
    <property type="project" value="InterPro"/>
</dbReference>
<dbReference type="GO" id="GO:0006412">
    <property type="term" value="P:translation"/>
    <property type="evidence" value="ECO:0007669"/>
    <property type="project" value="UniProtKB-UniRule"/>
</dbReference>
<dbReference type="CDD" id="cd14871">
    <property type="entry name" value="uS7_Chloroplast"/>
    <property type="match status" value="1"/>
</dbReference>
<dbReference type="FunFam" id="1.10.455.10:FF:000001">
    <property type="entry name" value="30S ribosomal protein S7"/>
    <property type="match status" value="1"/>
</dbReference>
<dbReference type="Gene3D" id="1.10.455.10">
    <property type="entry name" value="Ribosomal protein S7 domain"/>
    <property type="match status" value="1"/>
</dbReference>
<dbReference type="HAMAP" id="MF_00480_B">
    <property type="entry name" value="Ribosomal_uS7_B"/>
    <property type="match status" value="1"/>
</dbReference>
<dbReference type="InterPro" id="IPR000235">
    <property type="entry name" value="Ribosomal_uS7"/>
</dbReference>
<dbReference type="InterPro" id="IPR005717">
    <property type="entry name" value="Ribosomal_uS7_bac/org-type"/>
</dbReference>
<dbReference type="InterPro" id="IPR020606">
    <property type="entry name" value="Ribosomal_uS7_CS"/>
</dbReference>
<dbReference type="InterPro" id="IPR023798">
    <property type="entry name" value="Ribosomal_uS7_dom"/>
</dbReference>
<dbReference type="InterPro" id="IPR036823">
    <property type="entry name" value="Ribosomal_uS7_dom_sf"/>
</dbReference>
<dbReference type="NCBIfam" id="TIGR01029">
    <property type="entry name" value="rpsG_bact"/>
    <property type="match status" value="1"/>
</dbReference>
<dbReference type="PANTHER" id="PTHR11205">
    <property type="entry name" value="RIBOSOMAL PROTEIN S7"/>
    <property type="match status" value="1"/>
</dbReference>
<dbReference type="Pfam" id="PF00177">
    <property type="entry name" value="Ribosomal_S7"/>
    <property type="match status" value="1"/>
</dbReference>
<dbReference type="PIRSF" id="PIRSF002122">
    <property type="entry name" value="RPS7p_RPS7a_RPS5e_RPS7o"/>
    <property type="match status" value="1"/>
</dbReference>
<dbReference type="SUPFAM" id="SSF47973">
    <property type="entry name" value="Ribosomal protein S7"/>
    <property type="match status" value="1"/>
</dbReference>
<dbReference type="PROSITE" id="PS00052">
    <property type="entry name" value="RIBOSOMAL_S7"/>
    <property type="match status" value="1"/>
</dbReference>
<accession>P59063</accession>
<sequence>MSRRKNAEKRIVNPDPVYRNRLVNMLVNRILKNGKKSLAYRILYKAMKNIKTKTQKNPLFILRQAIRKATPKVAVKARRVGGSTYQVPVEIQSSQGKALAIRWLLTSAKKRAGRNFISKLSNEIIDTARDTGNTIRKKEETHRMAESNRAFAHFR</sequence>
<reference key="1">
    <citation type="journal article" date="2002" name="Proc. Natl. Acad. Sci. U.S.A.">
        <title>The chloroplast and mitochondrial genome sequences of the charophyte Chaetosphaeridium globosum: insights into the timing of the events that restructured organelle DNAs within the green algal lineage that led to land plants.</title>
        <authorList>
            <person name="Turmel M."/>
            <person name="Otis C."/>
            <person name="Lemieux C."/>
        </authorList>
    </citation>
    <scope>NUCLEOTIDE SEQUENCE [LARGE SCALE GENOMIC DNA]</scope>
    <source>
        <strain>M1311</strain>
    </source>
</reference>
<evidence type="ECO:0000250" key="1"/>
<evidence type="ECO:0000305" key="2"/>
<geneLocation type="chloroplast"/>
<proteinExistence type="inferred from homology"/>
<gene>
    <name type="primary">rps7</name>
</gene>
<keyword id="KW-0150">Chloroplast</keyword>
<keyword id="KW-0934">Plastid</keyword>
<keyword id="KW-0687">Ribonucleoprotein</keyword>
<keyword id="KW-0689">Ribosomal protein</keyword>
<keyword id="KW-0694">RNA-binding</keyword>
<keyword id="KW-0699">rRNA-binding</keyword>